<dbReference type="EC" id="4.2.1.49" evidence="1"/>
<dbReference type="EMBL" id="CP000647">
    <property type="protein sequence ID" value="ABR76231.1"/>
    <property type="molecule type" value="Genomic_DNA"/>
</dbReference>
<dbReference type="RefSeq" id="WP_012068474.1">
    <property type="nucleotide sequence ID" value="NC_009648.1"/>
</dbReference>
<dbReference type="SMR" id="A6T6L0"/>
<dbReference type="STRING" id="272620.KPN_00795"/>
<dbReference type="jPOST" id="A6T6L0"/>
<dbReference type="PaxDb" id="272620-KPN_00795"/>
<dbReference type="EnsemblBacteria" id="ABR76231">
    <property type="protein sequence ID" value="ABR76231"/>
    <property type="gene ID" value="KPN_00795"/>
</dbReference>
<dbReference type="KEGG" id="kpn:KPN_00795"/>
<dbReference type="HOGENOM" id="CLU_018868_0_1_6"/>
<dbReference type="UniPathway" id="UPA00379">
    <property type="reaction ID" value="UER00550"/>
</dbReference>
<dbReference type="Proteomes" id="UP000000265">
    <property type="component" value="Chromosome"/>
</dbReference>
<dbReference type="GO" id="GO:0005737">
    <property type="term" value="C:cytoplasm"/>
    <property type="evidence" value="ECO:0007669"/>
    <property type="project" value="UniProtKB-SubCell"/>
</dbReference>
<dbReference type="GO" id="GO:0016153">
    <property type="term" value="F:urocanate hydratase activity"/>
    <property type="evidence" value="ECO:0007669"/>
    <property type="project" value="UniProtKB-UniRule"/>
</dbReference>
<dbReference type="GO" id="GO:0019556">
    <property type="term" value="P:L-histidine catabolic process to glutamate and formamide"/>
    <property type="evidence" value="ECO:0007669"/>
    <property type="project" value="UniProtKB-UniPathway"/>
</dbReference>
<dbReference type="GO" id="GO:0019557">
    <property type="term" value="P:L-histidine catabolic process to glutamate and formate"/>
    <property type="evidence" value="ECO:0007669"/>
    <property type="project" value="UniProtKB-UniPathway"/>
</dbReference>
<dbReference type="FunFam" id="3.40.50.10730:FF:000001">
    <property type="entry name" value="Urocanate hydratase"/>
    <property type="match status" value="1"/>
</dbReference>
<dbReference type="Gene3D" id="3.40.50.10730">
    <property type="entry name" value="Urocanase like domains"/>
    <property type="match status" value="1"/>
</dbReference>
<dbReference type="Gene3D" id="3.40.1770.10">
    <property type="entry name" value="Urocanase superfamily"/>
    <property type="match status" value="1"/>
</dbReference>
<dbReference type="HAMAP" id="MF_00577">
    <property type="entry name" value="HutU"/>
    <property type="match status" value="1"/>
</dbReference>
<dbReference type="InterPro" id="IPR055351">
    <property type="entry name" value="Urocanase"/>
</dbReference>
<dbReference type="InterPro" id="IPR023637">
    <property type="entry name" value="Urocanase-like"/>
</dbReference>
<dbReference type="InterPro" id="IPR035401">
    <property type="entry name" value="Urocanase_C"/>
</dbReference>
<dbReference type="InterPro" id="IPR038364">
    <property type="entry name" value="Urocanase_central_sf"/>
</dbReference>
<dbReference type="InterPro" id="IPR023636">
    <property type="entry name" value="Urocanase_CS"/>
</dbReference>
<dbReference type="InterPro" id="IPR035400">
    <property type="entry name" value="Urocanase_N"/>
</dbReference>
<dbReference type="InterPro" id="IPR035085">
    <property type="entry name" value="Urocanase_Rossmann-like"/>
</dbReference>
<dbReference type="InterPro" id="IPR036190">
    <property type="entry name" value="Urocanase_sf"/>
</dbReference>
<dbReference type="NCBIfam" id="TIGR01228">
    <property type="entry name" value="hutU"/>
    <property type="match status" value="1"/>
</dbReference>
<dbReference type="NCBIfam" id="NF003820">
    <property type="entry name" value="PRK05414.1"/>
    <property type="match status" value="1"/>
</dbReference>
<dbReference type="PANTHER" id="PTHR12216">
    <property type="entry name" value="UROCANATE HYDRATASE"/>
    <property type="match status" value="1"/>
</dbReference>
<dbReference type="PANTHER" id="PTHR12216:SF4">
    <property type="entry name" value="UROCANATE HYDRATASE"/>
    <property type="match status" value="1"/>
</dbReference>
<dbReference type="Pfam" id="PF01175">
    <property type="entry name" value="Urocanase"/>
    <property type="match status" value="1"/>
</dbReference>
<dbReference type="Pfam" id="PF17392">
    <property type="entry name" value="Urocanase_C"/>
    <property type="match status" value="1"/>
</dbReference>
<dbReference type="Pfam" id="PF17391">
    <property type="entry name" value="Urocanase_N"/>
    <property type="match status" value="1"/>
</dbReference>
<dbReference type="PIRSF" id="PIRSF001423">
    <property type="entry name" value="Urocanate_hydrat"/>
    <property type="match status" value="1"/>
</dbReference>
<dbReference type="SUPFAM" id="SSF111326">
    <property type="entry name" value="Urocanase"/>
    <property type="match status" value="1"/>
</dbReference>
<dbReference type="PROSITE" id="PS01233">
    <property type="entry name" value="UROCANASE"/>
    <property type="match status" value="1"/>
</dbReference>
<sequence length="562" mass="61553">MSQSKYRQLDVRAPRGTTLTAKSWLTEAPLRMLMNNLDPDVAENPHELVVYGGIGRAARNWECYDAIVKALKNLESDETLLVQSGKPVGVFKTHENSPRVLIANSNLVPHWATWEHFNELDAKGLAMYGQMTAGSWIYIGSQGIVQGTYETFVEAGRQHYQGSLKGRWVLTAGLGGMGGAQPLAATLAGACSLNIECQQSRIDFRLRTRYVDEQATSLDDALARIKKYTAEGRAISIALCGNAAEIVPELVKRGVRPDMVTDQTSAHDPLHGYLPKGWSWEEYQQKAESDPQGTILAAKRSMADHVQAMLAFHEMGVPTFDYGNNIRQMAQEVGVSNAFDFPGFVPAYIRPLFCRGIGPFRWVALSGDPQDIYKTDAKVKEIIKDDQHLHHWLDMARERISFQGLPARICWVGLEWRQKLGLAFNEMVRSGEVSAPIVIGRDHLDSGSVASPNRETEAMRDGSDAVSDWPLLNALLNTASGATWVSLHHGGGVGMGFSQHSGMVIVCDGTDEAAARIARVLRNDPATGVMRHADAGYEIAIECAAEQGLNLPMVAATQGNAK</sequence>
<comment type="function">
    <text evidence="1">Catalyzes the conversion of urocanate to 4-imidazolone-5-propionate.</text>
</comment>
<comment type="catalytic activity">
    <reaction evidence="1">
        <text>4-imidazolone-5-propanoate = trans-urocanate + H2O</text>
        <dbReference type="Rhea" id="RHEA:13101"/>
        <dbReference type="ChEBI" id="CHEBI:15377"/>
        <dbReference type="ChEBI" id="CHEBI:17771"/>
        <dbReference type="ChEBI" id="CHEBI:77893"/>
        <dbReference type="EC" id="4.2.1.49"/>
    </reaction>
</comment>
<comment type="cofactor">
    <cofactor evidence="1">
        <name>NAD(+)</name>
        <dbReference type="ChEBI" id="CHEBI:57540"/>
    </cofactor>
    <text evidence="1">Binds 1 NAD(+) per subunit.</text>
</comment>
<comment type="pathway">
    <text evidence="1">Amino-acid degradation; L-histidine degradation into L-glutamate; N-formimidoyl-L-glutamate from L-histidine: step 2/3.</text>
</comment>
<comment type="subcellular location">
    <subcellularLocation>
        <location evidence="1">Cytoplasm</location>
    </subcellularLocation>
</comment>
<comment type="similarity">
    <text evidence="1">Belongs to the urocanase family.</text>
</comment>
<accession>A6T6L0</accession>
<protein>
    <recommendedName>
        <fullName evidence="1">Urocanate hydratase</fullName>
        <shortName evidence="1">Urocanase</shortName>
        <ecNumber evidence="1">4.2.1.49</ecNumber>
    </recommendedName>
    <alternativeName>
        <fullName evidence="1">Imidazolonepropionate hydrolase</fullName>
    </alternativeName>
</protein>
<reference key="1">
    <citation type="submission" date="2006-09" db="EMBL/GenBank/DDBJ databases">
        <authorList>
            <consortium name="The Klebsiella pneumonia Genome Sequencing Project"/>
            <person name="McClelland M."/>
            <person name="Sanderson E.K."/>
            <person name="Spieth J."/>
            <person name="Clifton W.S."/>
            <person name="Latreille P."/>
            <person name="Sabo A."/>
            <person name="Pepin K."/>
            <person name="Bhonagiri V."/>
            <person name="Porwollik S."/>
            <person name="Ali J."/>
            <person name="Wilson R.K."/>
        </authorList>
    </citation>
    <scope>NUCLEOTIDE SEQUENCE [LARGE SCALE GENOMIC DNA]</scope>
    <source>
        <strain>ATCC 700721 / MGH 78578</strain>
    </source>
</reference>
<feature type="chain" id="PRO_1000025132" description="Urocanate hydratase">
    <location>
        <begin position="1"/>
        <end position="562"/>
    </location>
</feature>
<feature type="active site" evidence="1">
    <location>
        <position position="410"/>
    </location>
</feature>
<feature type="binding site" evidence="1">
    <location>
        <begin position="52"/>
        <end position="53"/>
    </location>
    <ligand>
        <name>NAD(+)</name>
        <dbReference type="ChEBI" id="CHEBI:57540"/>
    </ligand>
</feature>
<feature type="binding site" evidence="1">
    <location>
        <position position="130"/>
    </location>
    <ligand>
        <name>NAD(+)</name>
        <dbReference type="ChEBI" id="CHEBI:57540"/>
    </ligand>
</feature>
<feature type="binding site" evidence="1">
    <location>
        <begin position="176"/>
        <end position="178"/>
    </location>
    <ligand>
        <name>NAD(+)</name>
        <dbReference type="ChEBI" id="CHEBI:57540"/>
    </ligand>
</feature>
<feature type="binding site" evidence="1">
    <location>
        <position position="196"/>
    </location>
    <ligand>
        <name>NAD(+)</name>
        <dbReference type="ChEBI" id="CHEBI:57540"/>
    </ligand>
</feature>
<feature type="binding site" evidence="1">
    <location>
        <position position="201"/>
    </location>
    <ligand>
        <name>NAD(+)</name>
        <dbReference type="ChEBI" id="CHEBI:57540"/>
    </ligand>
</feature>
<feature type="binding site" evidence="1">
    <location>
        <begin position="242"/>
        <end position="243"/>
    </location>
    <ligand>
        <name>NAD(+)</name>
        <dbReference type="ChEBI" id="CHEBI:57540"/>
    </ligand>
</feature>
<feature type="binding site" evidence="1">
    <location>
        <begin position="263"/>
        <end position="267"/>
    </location>
    <ligand>
        <name>NAD(+)</name>
        <dbReference type="ChEBI" id="CHEBI:57540"/>
    </ligand>
</feature>
<feature type="binding site" evidence="1">
    <location>
        <begin position="273"/>
        <end position="274"/>
    </location>
    <ligand>
        <name>NAD(+)</name>
        <dbReference type="ChEBI" id="CHEBI:57540"/>
    </ligand>
</feature>
<feature type="binding site" evidence="1">
    <location>
        <position position="322"/>
    </location>
    <ligand>
        <name>NAD(+)</name>
        <dbReference type="ChEBI" id="CHEBI:57540"/>
    </ligand>
</feature>
<feature type="binding site" evidence="1">
    <location>
        <position position="492"/>
    </location>
    <ligand>
        <name>NAD(+)</name>
        <dbReference type="ChEBI" id="CHEBI:57540"/>
    </ligand>
</feature>
<evidence type="ECO:0000255" key="1">
    <source>
        <dbReference type="HAMAP-Rule" id="MF_00577"/>
    </source>
</evidence>
<proteinExistence type="inferred from homology"/>
<organism>
    <name type="scientific">Klebsiella pneumoniae subsp. pneumoniae (strain ATCC 700721 / MGH 78578)</name>
    <dbReference type="NCBI Taxonomy" id="272620"/>
    <lineage>
        <taxon>Bacteria</taxon>
        <taxon>Pseudomonadati</taxon>
        <taxon>Pseudomonadota</taxon>
        <taxon>Gammaproteobacteria</taxon>
        <taxon>Enterobacterales</taxon>
        <taxon>Enterobacteriaceae</taxon>
        <taxon>Klebsiella/Raoultella group</taxon>
        <taxon>Klebsiella</taxon>
        <taxon>Klebsiella pneumoniae complex</taxon>
    </lineage>
</organism>
<name>HUTU_KLEP7</name>
<gene>
    <name evidence="1" type="primary">hutU</name>
    <name type="ordered locus">KPN78578_07700</name>
    <name type="ORF">KPN_00795</name>
</gene>
<keyword id="KW-0963">Cytoplasm</keyword>
<keyword id="KW-0369">Histidine metabolism</keyword>
<keyword id="KW-0456">Lyase</keyword>
<keyword id="KW-0520">NAD</keyword>